<organism>
    <name type="scientific">Homo sapiens</name>
    <name type="common">Human</name>
    <dbReference type="NCBI Taxonomy" id="9606"/>
    <lineage>
        <taxon>Eukaryota</taxon>
        <taxon>Metazoa</taxon>
        <taxon>Chordata</taxon>
        <taxon>Craniata</taxon>
        <taxon>Vertebrata</taxon>
        <taxon>Euteleostomi</taxon>
        <taxon>Mammalia</taxon>
        <taxon>Eutheria</taxon>
        <taxon>Euarchontoglires</taxon>
        <taxon>Primates</taxon>
        <taxon>Haplorrhini</taxon>
        <taxon>Catarrhini</taxon>
        <taxon>Hominidae</taxon>
        <taxon>Homo</taxon>
    </lineage>
</organism>
<proteinExistence type="evidence at protein level"/>
<comment type="function">
    <text evidence="1 3">E2-like enzyme involved in autophagy. Acts as an E2-like enzyme that catalyzes the conjugation of ATG12 to ATG5. ATG12 conjugation to ATG5 is required for autophagy. Likely serves as an ATG5-recognition molecule. Not involved in ATG12 conjugation to ATG3 (By similarity). Plays a role in adenovirus-mediated cell lysis.</text>
</comment>
<comment type="subunit">
    <text evidence="1 4">Interacts with MAP1LC3A. By interacting with MAP1LC3A, it plays a role in the conjugation of ATG12 to ATG5. Also able to directly interact either with ATG5 or ATG7 (By similarity). Interacts with IRGM.</text>
</comment>
<comment type="interaction">
    <interactant intactId="EBI-1048913">
        <id>Q9H0Y0</id>
    </interactant>
    <interactant intactId="EBI-1047414">
        <id>Q9H1Y0</id>
        <label>ATG5</label>
    </interactant>
    <organismsDiffer>false</organismsDiffer>
    <experiments>5</experiments>
</comment>
<comment type="interaction">
    <interactant intactId="EBI-1048913">
        <id>Q9H0Y0</id>
    </interactant>
    <interactant intactId="EBI-930964">
        <id>P54253</id>
        <label>ATXN1</label>
    </interactant>
    <organismsDiffer>false</organismsDiffer>
    <experiments>6</experiments>
</comment>
<comment type="interaction">
    <interactant intactId="EBI-1048913">
        <id>Q9H0Y0</id>
    </interactant>
    <interactant intactId="EBI-718729">
        <id>P55212</id>
        <label>CASP6</label>
    </interactant>
    <organismsDiffer>false</organismsDiffer>
    <experiments>3</experiments>
</comment>
<comment type="interaction">
    <interactant intactId="EBI-1048913">
        <id>Q9H0Y0</id>
    </interactant>
    <interactant intactId="EBI-745535">
        <id>Q8NI60</id>
        <label>COQ8A</label>
    </interactant>
    <organismsDiffer>false</organismsDiffer>
    <experiments>3</experiments>
</comment>
<comment type="interaction">
    <interactant intactId="EBI-1048913">
        <id>Q9H0Y0</id>
    </interactant>
    <interactant intactId="EBI-356942">
        <id>P62879</id>
        <label>GNB2</label>
    </interactant>
    <organismsDiffer>false</organismsDiffer>
    <experiments>3</experiments>
</comment>
<comment type="interaction">
    <interactant intactId="EBI-1048913">
        <id>Q9H0Y0</id>
    </interactant>
    <interactant intactId="EBI-473886">
        <id>O00291</id>
        <label>HIP1</label>
    </interactant>
    <organismsDiffer>false</organismsDiffer>
    <experiments>3</experiments>
</comment>
<comment type="interaction">
    <interactant intactId="EBI-1048913">
        <id>Q9H0Y0</id>
    </interactant>
    <interactant intactId="EBI-10975473">
        <id>O60333-2</id>
        <label>KIF1B</label>
    </interactant>
    <organismsDiffer>false</organismsDiffer>
    <experiments>3</experiments>
</comment>
<comment type="interaction">
    <interactant intactId="EBI-1048913">
        <id>Q9H0Y0</id>
    </interactant>
    <interactant intactId="EBI-21591415">
        <id>P13473-2</id>
        <label>LAMP2</label>
    </interactant>
    <organismsDiffer>false</organismsDiffer>
    <experiments>3</experiments>
</comment>
<comment type="interaction">
    <interactant intactId="EBI-1048913">
        <id>Q9H0Y0</id>
    </interactant>
    <interactant intactId="EBI-21251460">
        <id>O60260-5</id>
        <label>PRKN</label>
    </interactant>
    <organismsDiffer>false</organismsDiffer>
    <experiments>3</experiments>
</comment>
<comment type="interaction">
    <interactant intactId="EBI-1048913">
        <id>Q9H0Y0</id>
    </interactant>
    <interactant intactId="EBI-5280197">
        <id>O75400-2</id>
        <label>PRPF40A</label>
    </interactant>
    <organismsDiffer>false</organismsDiffer>
    <experiments>3</experiments>
</comment>
<comment type="interaction">
    <interactant intactId="EBI-1048913">
        <id>Q9H0Y0</id>
    </interactant>
    <interactant intactId="EBI-286642">
        <id>P62826</id>
        <label>RAN</label>
    </interactant>
    <organismsDiffer>false</organismsDiffer>
    <experiments>3</experiments>
</comment>
<comment type="interaction">
    <interactant intactId="EBI-1048913">
        <id>Q9H0Y0</id>
    </interactant>
    <interactant intactId="EBI-396669">
        <id>Q9Y3C5</id>
        <label>RNF11</label>
    </interactant>
    <organismsDiffer>false</organismsDiffer>
    <experiments>3</experiments>
</comment>
<comment type="interaction">
    <interactant intactId="EBI-1048913">
        <id>Q9H0Y0</id>
    </interactant>
    <interactant intactId="EBI-985879">
        <id>P37840</id>
        <label>SNCA</label>
    </interactant>
    <organismsDiffer>false</organismsDiffer>
    <experiments>3</experiments>
</comment>
<comment type="subcellular location">
    <subcellularLocation>
        <location evidence="7">Cytoplasm</location>
    </subcellularLocation>
</comment>
<comment type="alternative products">
    <event type="alternative splicing"/>
    <isoform>
        <id>Q9H0Y0-1</id>
        <name>1</name>
        <sequence type="displayed"/>
    </isoform>
    <isoform>
        <id>Q9H0Y0-2</id>
        <name>2</name>
        <sequence type="described" ref="VSP_013272 VSP_013273"/>
    </isoform>
</comment>
<comment type="similarity">
    <text evidence="7">Belongs to the ATG10 family.</text>
</comment>
<comment type="sequence caution" evidence="7">
    <conflict type="frameshift">
        <sequence resource="EMBL" id="BC004551"/>
    </conflict>
</comment>
<comment type="sequence caution" evidence="7">
    <conflict type="frameshift">
        <sequence resource="EMBL" id="BC027718"/>
    </conflict>
</comment>
<feature type="chain" id="PRO_0000096183" description="Ubiquitin-like-conjugating enzyme ATG10">
    <location>
        <begin position="1"/>
        <end position="220"/>
    </location>
</feature>
<feature type="active site" description="Glycyl thioester intermediate" evidence="1">
    <location>
        <position position="166"/>
    </location>
</feature>
<feature type="splice variant" id="VSP_013272" description="In isoform 2." evidence="5 6">
    <original>EAFELPLDDCEVIETAAASEVIKYEYHVLYSCSYQVPVLYFRASFLDGRPLTL</original>
    <variation>VKSCSVTQAGVQLRDLSSLQPPPSGFKQFSCLSLPSNWDYRGSPLHLANFLYF</variation>
    <location>
        <begin position="73"/>
        <end position="125"/>
    </location>
</feature>
<feature type="splice variant" id="VSP_013273" description="In isoform 2." evidence="5 6">
    <location>
        <begin position="126"/>
        <end position="220"/>
    </location>
</feature>
<feature type="sequence variant" id="VAR_024370" description="In dbSNP:rs3734114.">
    <original>S</original>
    <variation>P</variation>
    <location>
        <position position="62"/>
    </location>
</feature>
<feature type="sequence variant" id="VAR_021562" description="In dbSNP:rs1864183." evidence="2">
    <original>T</original>
    <variation>M</variation>
    <location>
        <position position="212"/>
    </location>
</feature>
<feature type="sequence variant" id="VAR_021563" description="In dbSNP:rs1864182." evidence="2">
    <original>P</original>
    <variation>H</variation>
    <location>
        <position position="220"/>
    </location>
</feature>
<protein>
    <recommendedName>
        <fullName>Ubiquitin-like-conjugating enzyme ATG10</fullName>
        <ecNumber>2.3.2.-</ecNumber>
    </recommendedName>
    <alternativeName>
        <fullName>Autophagy-related protein 10</fullName>
        <shortName>APG10-like</shortName>
    </alternativeName>
</protein>
<name>ATG10_HUMAN</name>
<dbReference type="EC" id="2.3.2.-"/>
<dbReference type="EMBL" id="AF318326">
    <property type="protein sequence ID" value="AAL55833.1"/>
    <property type="molecule type" value="mRNA"/>
</dbReference>
<dbReference type="EMBL" id="AK024016">
    <property type="protein sequence ID" value="BAB14778.1"/>
    <property type="molecule type" value="mRNA"/>
</dbReference>
<dbReference type="EMBL" id="AK315752">
    <property type="protein sequence ID" value="BAG38106.1"/>
    <property type="molecule type" value="mRNA"/>
</dbReference>
<dbReference type="EMBL" id="AL136912">
    <property type="protein sequence ID" value="CAB66846.1"/>
    <property type="molecule type" value="mRNA"/>
</dbReference>
<dbReference type="EMBL" id="BC004551">
    <property type="status" value="NOT_ANNOTATED_CDS"/>
    <property type="molecule type" value="mRNA"/>
</dbReference>
<dbReference type="EMBL" id="BC027718">
    <property type="status" value="NOT_ANNOTATED_CDS"/>
    <property type="molecule type" value="mRNA"/>
</dbReference>
<dbReference type="EMBL" id="BC029268">
    <property type="protein sequence ID" value="AAH29268.1"/>
    <property type="molecule type" value="mRNA"/>
</dbReference>
<dbReference type="CCDS" id="CCDS4057.1">
    <molecule id="Q9H0Y0-1"/>
</dbReference>
<dbReference type="RefSeq" id="NP_001124500.1">
    <molecule id="Q9H0Y0-1"/>
    <property type="nucleotide sequence ID" value="NM_001131028.2"/>
</dbReference>
<dbReference type="RefSeq" id="NP_113670.1">
    <molecule id="Q9H0Y0-1"/>
    <property type="nucleotide sequence ID" value="NM_031482.5"/>
</dbReference>
<dbReference type="RefSeq" id="XP_005248667.1">
    <molecule id="Q9H0Y0-1"/>
    <property type="nucleotide sequence ID" value="XM_005248610.6"/>
</dbReference>
<dbReference type="RefSeq" id="XP_005248668.1">
    <molecule id="Q9H0Y0-1"/>
    <property type="nucleotide sequence ID" value="XM_005248611.6"/>
</dbReference>
<dbReference type="RefSeq" id="XP_047273754.1">
    <molecule id="Q9H0Y0-1"/>
    <property type="nucleotide sequence ID" value="XM_047417798.1"/>
</dbReference>
<dbReference type="RefSeq" id="XP_047273755.1">
    <molecule id="Q9H0Y0-1"/>
    <property type="nucleotide sequence ID" value="XM_047417799.1"/>
</dbReference>
<dbReference type="RefSeq" id="XP_047273756.1">
    <molecule id="Q9H0Y0-1"/>
    <property type="nucleotide sequence ID" value="XM_047417800.1"/>
</dbReference>
<dbReference type="RefSeq" id="XP_054209581.1">
    <molecule id="Q9H0Y0-1"/>
    <property type="nucleotide sequence ID" value="XM_054353606.1"/>
</dbReference>
<dbReference type="RefSeq" id="XP_054209582.1">
    <molecule id="Q9H0Y0-1"/>
    <property type="nucleotide sequence ID" value="XM_054353607.1"/>
</dbReference>
<dbReference type="RefSeq" id="XP_054209583.1">
    <molecule id="Q9H0Y0-1"/>
    <property type="nucleotide sequence ID" value="XM_054353608.1"/>
</dbReference>
<dbReference type="RefSeq" id="XP_054209584.1">
    <molecule id="Q9H0Y0-1"/>
    <property type="nucleotide sequence ID" value="XM_054353609.1"/>
</dbReference>
<dbReference type="RefSeq" id="XP_054209585.1">
    <molecule id="Q9H0Y0-1"/>
    <property type="nucleotide sequence ID" value="XM_054353610.1"/>
</dbReference>
<dbReference type="SMR" id="Q9H0Y0"/>
<dbReference type="BioGRID" id="123745">
    <property type="interactions" value="213"/>
</dbReference>
<dbReference type="FunCoup" id="Q9H0Y0">
    <property type="interactions" value="941"/>
</dbReference>
<dbReference type="IntAct" id="Q9H0Y0">
    <property type="interactions" value="50"/>
</dbReference>
<dbReference type="STRING" id="9606.ENSP00000282185"/>
<dbReference type="iPTMnet" id="Q9H0Y0"/>
<dbReference type="PhosphoSitePlus" id="Q9H0Y0"/>
<dbReference type="BioMuta" id="ATG10"/>
<dbReference type="DMDM" id="62286633"/>
<dbReference type="jPOST" id="Q9H0Y0"/>
<dbReference type="MassIVE" id="Q9H0Y0"/>
<dbReference type="PaxDb" id="9606-ENSP00000282185"/>
<dbReference type="PeptideAtlas" id="Q9H0Y0"/>
<dbReference type="ProteomicsDB" id="80344">
    <molecule id="Q9H0Y0-1"/>
</dbReference>
<dbReference type="ProteomicsDB" id="80345">
    <molecule id="Q9H0Y0-2"/>
</dbReference>
<dbReference type="Antibodypedia" id="24713">
    <property type="antibodies" value="375 antibodies from 33 providers"/>
</dbReference>
<dbReference type="DNASU" id="83734"/>
<dbReference type="Ensembl" id="ENST00000282185.8">
    <molecule id="Q9H0Y0-1"/>
    <property type="protein sequence ID" value="ENSP00000282185.3"/>
    <property type="gene ID" value="ENSG00000152348.16"/>
</dbReference>
<dbReference type="Ensembl" id="ENST00000355178.8">
    <molecule id="Q9H0Y0-2"/>
    <property type="protein sequence ID" value="ENSP00000347309.4"/>
    <property type="gene ID" value="ENSG00000152348.16"/>
</dbReference>
<dbReference type="Ensembl" id="ENST00000458350.7">
    <molecule id="Q9H0Y0-1"/>
    <property type="protein sequence ID" value="ENSP00000404938.3"/>
    <property type="gene ID" value="ENSG00000152348.16"/>
</dbReference>
<dbReference type="Ensembl" id="ENST00000513443.5">
    <molecule id="Q9H0Y0-2"/>
    <property type="protein sequence ID" value="ENSP00000425182.1"/>
    <property type="gene ID" value="ENSG00000152348.16"/>
</dbReference>
<dbReference type="GeneID" id="83734"/>
<dbReference type="KEGG" id="hsa:83734"/>
<dbReference type="MANE-Select" id="ENST00000282185.8">
    <property type="protein sequence ID" value="ENSP00000282185.3"/>
    <property type="RefSeq nucleotide sequence ID" value="NM_031482.5"/>
    <property type="RefSeq protein sequence ID" value="NP_113670.1"/>
</dbReference>
<dbReference type="UCSC" id="uc003khq.2">
    <molecule id="Q9H0Y0-1"/>
    <property type="organism name" value="human"/>
</dbReference>
<dbReference type="AGR" id="HGNC:20315"/>
<dbReference type="CTD" id="83734"/>
<dbReference type="DisGeNET" id="83734"/>
<dbReference type="GeneCards" id="ATG10"/>
<dbReference type="HGNC" id="HGNC:20315">
    <property type="gene designation" value="ATG10"/>
</dbReference>
<dbReference type="HPA" id="ENSG00000152348">
    <property type="expression patterns" value="Low tissue specificity"/>
</dbReference>
<dbReference type="MIM" id="610800">
    <property type="type" value="gene"/>
</dbReference>
<dbReference type="neXtProt" id="NX_Q9H0Y0"/>
<dbReference type="OpenTargets" id="ENSG00000152348"/>
<dbReference type="PharmGKB" id="PA134872167"/>
<dbReference type="VEuPathDB" id="HostDB:ENSG00000152348"/>
<dbReference type="eggNOG" id="KOG4741">
    <property type="taxonomic scope" value="Eukaryota"/>
</dbReference>
<dbReference type="GeneTree" id="ENSGT00390000000924"/>
<dbReference type="HOGENOM" id="CLU_1991882_0_0_1"/>
<dbReference type="InParanoid" id="Q9H0Y0"/>
<dbReference type="OMA" id="WKTSKDC"/>
<dbReference type="OrthoDB" id="4089664at2759"/>
<dbReference type="PAN-GO" id="Q9H0Y0">
    <property type="GO annotations" value="4 GO annotations based on evolutionary models"/>
</dbReference>
<dbReference type="PhylomeDB" id="Q9H0Y0"/>
<dbReference type="TreeFam" id="TF314016"/>
<dbReference type="PathwayCommons" id="Q9H0Y0"/>
<dbReference type="Reactome" id="R-HSA-1632852">
    <property type="pathway name" value="Macroautophagy"/>
</dbReference>
<dbReference type="SignaLink" id="Q9H0Y0"/>
<dbReference type="SIGNOR" id="Q9H0Y0"/>
<dbReference type="BioGRID-ORCS" id="83734">
    <property type="hits" value="28 hits in 1164 CRISPR screens"/>
</dbReference>
<dbReference type="ChiTaRS" id="ATG10">
    <property type="organism name" value="human"/>
</dbReference>
<dbReference type="GeneWiki" id="ATG10"/>
<dbReference type="GenomeRNAi" id="83734"/>
<dbReference type="Pharos" id="Q9H0Y0">
    <property type="development level" value="Tbio"/>
</dbReference>
<dbReference type="PRO" id="PR:Q9H0Y0"/>
<dbReference type="Proteomes" id="UP000005640">
    <property type="component" value="Chromosome 5"/>
</dbReference>
<dbReference type="RNAct" id="Q9H0Y0">
    <property type="molecule type" value="protein"/>
</dbReference>
<dbReference type="Bgee" id="ENSG00000152348">
    <property type="expression patterns" value="Expressed in male germ line stem cell (sensu Vertebrata) in testis and 150 other cell types or tissues"/>
</dbReference>
<dbReference type="ExpressionAtlas" id="Q9H0Y0">
    <property type="expression patterns" value="baseline and differential"/>
</dbReference>
<dbReference type="GO" id="GO:0005829">
    <property type="term" value="C:cytosol"/>
    <property type="evidence" value="ECO:0000304"/>
    <property type="project" value="Reactome"/>
</dbReference>
<dbReference type="GO" id="GO:0061651">
    <property type="term" value="F:Atg12 conjugating enzyme activity"/>
    <property type="evidence" value="ECO:0000314"/>
    <property type="project" value="UniProt"/>
</dbReference>
<dbReference type="GO" id="GO:0019777">
    <property type="term" value="F:Atg12 transferase activity"/>
    <property type="evidence" value="ECO:0000250"/>
    <property type="project" value="UniProtKB"/>
</dbReference>
<dbReference type="GO" id="GO:0000045">
    <property type="term" value="P:autophagosome assembly"/>
    <property type="evidence" value="ECO:0000314"/>
    <property type="project" value="UniProt"/>
</dbReference>
<dbReference type="GO" id="GO:0006914">
    <property type="term" value="P:autophagy"/>
    <property type="evidence" value="ECO:0000315"/>
    <property type="project" value="UniProtKB"/>
</dbReference>
<dbReference type="GO" id="GO:0006983">
    <property type="term" value="P:ER overload response"/>
    <property type="evidence" value="ECO:0000315"/>
    <property type="project" value="BHF-UCL"/>
</dbReference>
<dbReference type="GO" id="GO:0000423">
    <property type="term" value="P:mitophagy"/>
    <property type="evidence" value="ECO:0000318"/>
    <property type="project" value="GO_Central"/>
</dbReference>
<dbReference type="GO" id="GO:0032446">
    <property type="term" value="P:protein modification by small protein conjugation"/>
    <property type="evidence" value="ECO:0000314"/>
    <property type="project" value="UniProtKB"/>
</dbReference>
<dbReference type="GO" id="GO:0015031">
    <property type="term" value="P:protein transport"/>
    <property type="evidence" value="ECO:0007669"/>
    <property type="project" value="UniProtKB-KW"/>
</dbReference>
<dbReference type="FunFam" id="3.30.1460.50:FF:000002">
    <property type="entry name" value="Autophagy related 10"/>
    <property type="match status" value="1"/>
</dbReference>
<dbReference type="Gene3D" id="3.30.1460.50">
    <property type="match status" value="1"/>
</dbReference>
<dbReference type="InterPro" id="IPR007135">
    <property type="entry name" value="Atg3/Atg10"/>
</dbReference>
<dbReference type="PANTHER" id="PTHR14957">
    <property type="entry name" value="UBIQUITIN-LIKE-CONJUGATING ENZYME ATG10"/>
    <property type="match status" value="1"/>
</dbReference>
<dbReference type="PANTHER" id="PTHR14957:SF1">
    <property type="entry name" value="UBIQUITIN-LIKE-CONJUGATING ENZYME ATG10"/>
    <property type="match status" value="1"/>
</dbReference>
<dbReference type="Pfam" id="PF03987">
    <property type="entry name" value="Autophagy_act_C"/>
    <property type="match status" value="1"/>
</dbReference>
<sequence>MEEDEFIGEKTFQRYCAEFIKHSQQIGDSWEWRPSKDCSDGYMCKIHFQIKNGSVMSHLGASTHGQTCLPMEEAFELPLDDCEVIETAAASEVIKYEYHVLYSCSYQVPVLYFRASFLDGRPLTLKDIWEGVHECYKMRLLQGPWDTITQQEHPILGQPFFVLHPCKTNEFMTPVLKNSQKINKNVNYITSWLSIVGPVVGLNLPLSYAKATSQDERNVP</sequence>
<reference key="1">
    <citation type="journal article" date="2004" name="Proc. Natl. Acad. Sci. U.S.A.">
        <title>Large-scale cDNA transfection screening for genes related to cancer development and progression.</title>
        <authorList>
            <person name="Wan D."/>
            <person name="Gong Y."/>
            <person name="Qin W."/>
            <person name="Zhang P."/>
            <person name="Li J."/>
            <person name="Wei L."/>
            <person name="Zhou X."/>
            <person name="Li H."/>
            <person name="Qiu X."/>
            <person name="Zhong F."/>
            <person name="He L."/>
            <person name="Yu J."/>
            <person name="Yao G."/>
            <person name="Jiang H."/>
            <person name="Qian L."/>
            <person name="Yu Y."/>
            <person name="Shu H."/>
            <person name="Chen X."/>
            <person name="Xu H."/>
            <person name="Guo M."/>
            <person name="Pan Z."/>
            <person name="Chen Y."/>
            <person name="Ge C."/>
            <person name="Yang S."/>
            <person name="Gu J."/>
        </authorList>
    </citation>
    <scope>NUCLEOTIDE SEQUENCE [LARGE SCALE MRNA] (ISOFORM 2)</scope>
</reference>
<reference key="2">
    <citation type="journal article" date="2004" name="Nat. Genet.">
        <title>Complete sequencing and characterization of 21,243 full-length human cDNAs.</title>
        <authorList>
            <person name="Ota T."/>
            <person name="Suzuki Y."/>
            <person name="Nishikawa T."/>
            <person name="Otsuki T."/>
            <person name="Sugiyama T."/>
            <person name="Irie R."/>
            <person name="Wakamatsu A."/>
            <person name="Hayashi K."/>
            <person name="Sato H."/>
            <person name="Nagai K."/>
            <person name="Kimura K."/>
            <person name="Makita H."/>
            <person name="Sekine M."/>
            <person name="Obayashi M."/>
            <person name="Nishi T."/>
            <person name="Shibahara T."/>
            <person name="Tanaka T."/>
            <person name="Ishii S."/>
            <person name="Yamamoto J."/>
            <person name="Saito K."/>
            <person name="Kawai Y."/>
            <person name="Isono Y."/>
            <person name="Nakamura Y."/>
            <person name="Nagahari K."/>
            <person name="Murakami K."/>
            <person name="Yasuda T."/>
            <person name="Iwayanagi T."/>
            <person name="Wagatsuma M."/>
            <person name="Shiratori A."/>
            <person name="Sudo H."/>
            <person name="Hosoiri T."/>
            <person name="Kaku Y."/>
            <person name="Kodaira H."/>
            <person name="Kondo H."/>
            <person name="Sugawara M."/>
            <person name="Takahashi M."/>
            <person name="Kanda K."/>
            <person name="Yokoi T."/>
            <person name="Furuya T."/>
            <person name="Kikkawa E."/>
            <person name="Omura Y."/>
            <person name="Abe K."/>
            <person name="Kamihara K."/>
            <person name="Katsuta N."/>
            <person name="Sato K."/>
            <person name="Tanikawa M."/>
            <person name="Yamazaki M."/>
            <person name="Ninomiya K."/>
            <person name="Ishibashi T."/>
            <person name="Yamashita H."/>
            <person name="Murakawa K."/>
            <person name="Fujimori K."/>
            <person name="Tanai H."/>
            <person name="Kimata M."/>
            <person name="Watanabe M."/>
            <person name="Hiraoka S."/>
            <person name="Chiba Y."/>
            <person name="Ishida S."/>
            <person name="Ono Y."/>
            <person name="Takiguchi S."/>
            <person name="Watanabe S."/>
            <person name="Yosida M."/>
            <person name="Hotuta T."/>
            <person name="Kusano J."/>
            <person name="Kanehori K."/>
            <person name="Takahashi-Fujii A."/>
            <person name="Hara H."/>
            <person name="Tanase T.-O."/>
            <person name="Nomura Y."/>
            <person name="Togiya S."/>
            <person name="Komai F."/>
            <person name="Hara R."/>
            <person name="Takeuchi K."/>
            <person name="Arita M."/>
            <person name="Imose N."/>
            <person name="Musashino K."/>
            <person name="Yuuki H."/>
            <person name="Oshima A."/>
            <person name="Sasaki N."/>
            <person name="Aotsuka S."/>
            <person name="Yoshikawa Y."/>
            <person name="Matsunawa H."/>
            <person name="Ichihara T."/>
            <person name="Shiohata N."/>
            <person name="Sano S."/>
            <person name="Moriya S."/>
            <person name="Momiyama H."/>
            <person name="Satoh N."/>
            <person name="Takami S."/>
            <person name="Terashima Y."/>
            <person name="Suzuki O."/>
            <person name="Nakagawa S."/>
            <person name="Senoh A."/>
            <person name="Mizoguchi H."/>
            <person name="Goto Y."/>
            <person name="Shimizu F."/>
            <person name="Wakebe H."/>
            <person name="Hishigaki H."/>
            <person name="Watanabe T."/>
            <person name="Sugiyama A."/>
            <person name="Takemoto M."/>
            <person name="Kawakami B."/>
            <person name="Yamazaki M."/>
            <person name="Watanabe K."/>
            <person name="Kumagai A."/>
            <person name="Itakura S."/>
            <person name="Fukuzumi Y."/>
            <person name="Fujimori Y."/>
            <person name="Komiyama M."/>
            <person name="Tashiro H."/>
            <person name="Tanigami A."/>
            <person name="Fujiwara T."/>
            <person name="Ono T."/>
            <person name="Yamada K."/>
            <person name="Fujii Y."/>
            <person name="Ozaki K."/>
            <person name="Hirao M."/>
            <person name="Ohmori Y."/>
            <person name="Kawabata A."/>
            <person name="Hikiji T."/>
            <person name="Kobatake N."/>
            <person name="Inagaki H."/>
            <person name="Ikema Y."/>
            <person name="Okamoto S."/>
            <person name="Okitani R."/>
            <person name="Kawakami T."/>
            <person name="Noguchi S."/>
            <person name="Itoh T."/>
            <person name="Shigeta K."/>
            <person name="Senba T."/>
            <person name="Matsumura K."/>
            <person name="Nakajima Y."/>
            <person name="Mizuno T."/>
            <person name="Morinaga M."/>
            <person name="Sasaki M."/>
            <person name="Togashi T."/>
            <person name="Oyama M."/>
            <person name="Hata H."/>
            <person name="Watanabe M."/>
            <person name="Komatsu T."/>
            <person name="Mizushima-Sugano J."/>
            <person name="Satoh T."/>
            <person name="Shirai Y."/>
            <person name="Takahashi Y."/>
            <person name="Nakagawa K."/>
            <person name="Okumura K."/>
            <person name="Nagase T."/>
            <person name="Nomura N."/>
            <person name="Kikuchi H."/>
            <person name="Masuho Y."/>
            <person name="Yamashita R."/>
            <person name="Nakai K."/>
            <person name="Yada T."/>
            <person name="Nakamura Y."/>
            <person name="Ohara O."/>
            <person name="Isogai T."/>
            <person name="Sugano S."/>
        </authorList>
    </citation>
    <scope>NUCLEOTIDE SEQUENCE [LARGE SCALE MRNA] (ISOFORMS 1 AND 2)</scope>
    <source>
        <tissue>Thymus</tissue>
    </source>
</reference>
<reference key="3">
    <citation type="journal article" date="2007" name="BMC Genomics">
        <title>The full-ORF clone resource of the German cDNA consortium.</title>
        <authorList>
            <person name="Bechtel S."/>
            <person name="Rosenfelder H."/>
            <person name="Duda A."/>
            <person name="Schmidt C.P."/>
            <person name="Ernst U."/>
            <person name="Wellenreuther R."/>
            <person name="Mehrle A."/>
            <person name="Schuster C."/>
            <person name="Bahr A."/>
            <person name="Bloecker H."/>
            <person name="Heubner D."/>
            <person name="Hoerlein A."/>
            <person name="Michel G."/>
            <person name="Wedler H."/>
            <person name="Koehrer K."/>
            <person name="Ottenwaelder B."/>
            <person name="Poustka A."/>
            <person name="Wiemann S."/>
            <person name="Schupp I."/>
        </authorList>
    </citation>
    <scope>NUCLEOTIDE SEQUENCE [LARGE SCALE MRNA] (ISOFORM 1)</scope>
    <source>
        <tissue>Uterus</tissue>
    </source>
</reference>
<reference key="4">
    <citation type="journal article" date="2004" name="Genome Res.">
        <title>The status, quality, and expansion of the NIH full-length cDNA project: the Mammalian Gene Collection (MGC).</title>
        <authorList>
            <consortium name="The MGC Project Team"/>
        </authorList>
    </citation>
    <scope>NUCLEOTIDE SEQUENCE [LARGE SCALE MRNA] (ISOFORM 1)</scope>
    <scope>VARIANTS MET-212 AND HIS-220</scope>
    <source>
        <tissue>Placenta</tissue>
        <tissue>Testis</tissue>
    </source>
</reference>
<reference key="5">
    <citation type="journal article" date="2011" name="J. Virol.">
        <title>Human adenovirus type 5 induces cell lysis through autophagy and autophagy-triggered caspase activity.</title>
        <authorList>
            <person name="Jiang H."/>
            <person name="White E.J."/>
            <person name="Rios-Vicil C.I."/>
            <person name="Xu J."/>
            <person name="Gomez-Manzano C."/>
            <person name="Fueyo J."/>
        </authorList>
    </citation>
    <scope>FUNCTION</scope>
</reference>
<reference key="6">
    <citation type="journal article" date="2011" name="PLoS Pathog.">
        <title>IRGM is a common target of RNA viruses that subvert the autophagy network.</title>
        <authorList>
            <person name="Gregoire I.P."/>
            <person name="Richetta C."/>
            <person name="Meyniel-Schicklin L."/>
            <person name="Borel S."/>
            <person name="Pradezynski F."/>
            <person name="Diaz O."/>
            <person name="Deloire A."/>
            <person name="Azocar O."/>
            <person name="Baguet J."/>
            <person name="Le Breton M."/>
            <person name="Mangeot P.E."/>
            <person name="Navratil V."/>
            <person name="Joubert P.E."/>
            <person name="Flacher M."/>
            <person name="Vidalain P.O."/>
            <person name="Andre P."/>
            <person name="Lotteau V."/>
            <person name="Biard-Piechaczyk M."/>
            <person name="Rabourdin-Combe C."/>
            <person name="Faure M."/>
        </authorList>
    </citation>
    <scope>INTERACTION WITH IRGM</scope>
</reference>
<evidence type="ECO:0000250" key="1"/>
<evidence type="ECO:0000269" key="2">
    <source>
    </source>
</evidence>
<evidence type="ECO:0000269" key="3">
    <source>
    </source>
</evidence>
<evidence type="ECO:0000269" key="4">
    <source>
    </source>
</evidence>
<evidence type="ECO:0000303" key="5">
    <source>
    </source>
</evidence>
<evidence type="ECO:0000303" key="6">
    <source>
    </source>
</evidence>
<evidence type="ECO:0000305" key="7"/>
<gene>
    <name type="primary">ATG10</name>
    <name type="synonym">APG10L</name>
    <name type="ORF">PP12616</name>
</gene>
<accession>Q9H0Y0</accession>
<accession>B2RE09</accession>
<accession>Q6PIX1</accession>
<accession>Q9H842</accession>
<keyword id="KW-0025">Alternative splicing</keyword>
<keyword id="KW-0072">Autophagy</keyword>
<keyword id="KW-0963">Cytoplasm</keyword>
<keyword id="KW-0653">Protein transport</keyword>
<keyword id="KW-1267">Proteomics identification</keyword>
<keyword id="KW-1185">Reference proteome</keyword>
<keyword id="KW-0808">Transferase</keyword>
<keyword id="KW-0813">Transport</keyword>
<keyword id="KW-0833">Ubl conjugation pathway</keyword>